<organism>
    <name type="scientific">Campylobacter jejuni subsp. jejuni serotype O:6 (strain 81116 / NCTC 11828)</name>
    <dbReference type="NCBI Taxonomy" id="407148"/>
    <lineage>
        <taxon>Bacteria</taxon>
        <taxon>Pseudomonadati</taxon>
        <taxon>Campylobacterota</taxon>
        <taxon>Epsilonproteobacteria</taxon>
        <taxon>Campylobacterales</taxon>
        <taxon>Campylobacteraceae</taxon>
        <taxon>Campylobacter</taxon>
    </lineage>
</organism>
<name>YQGF_CAMJ8</name>
<proteinExistence type="inferred from homology"/>
<gene>
    <name type="ordered locus">C8J_0594</name>
</gene>
<comment type="function">
    <text evidence="1">Could be a nuclease involved in processing of the 5'-end of pre-16S rRNA.</text>
</comment>
<comment type="subcellular location">
    <subcellularLocation>
        <location evidence="1">Cytoplasm</location>
    </subcellularLocation>
</comment>
<comment type="similarity">
    <text evidence="1">Belongs to the YqgF nuclease family.</text>
</comment>
<reference key="1">
    <citation type="journal article" date="2007" name="J. Bacteriol.">
        <title>The complete genome sequence of Campylobacter jejuni strain 81116 (NCTC11828).</title>
        <authorList>
            <person name="Pearson B.M."/>
            <person name="Gaskin D.J.H."/>
            <person name="Segers R.P.A.M."/>
            <person name="Wells J.M."/>
            <person name="Nuijten P.J.M."/>
            <person name="van Vliet A.H.M."/>
        </authorList>
    </citation>
    <scope>NUCLEOTIDE SEQUENCE [LARGE SCALE GENOMIC DNA]</scope>
    <source>
        <strain>81116 / NCTC 11828</strain>
    </source>
</reference>
<accession>A8FL56</accession>
<keyword id="KW-0963">Cytoplasm</keyword>
<keyword id="KW-0378">Hydrolase</keyword>
<keyword id="KW-0540">Nuclease</keyword>
<keyword id="KW-0690">Ribosome biogenesis</keyword>
<feature type="chain" id="PRO_1000072688" description="Putative pre-16S rRNA nuclease">
    <location>
        <begin position="1"/>
        <end position="127"/>
    </location>
</feature>
<sequence length="127" mass="14089">MRALALDVGLKRIGVALCIDKKIALPLDAVLRKNRNQAANEIKNLLKIHEISLLIVGIPKGGSSEEEMTRRIKHFVSLLEFDKEICFVDESGTSKEALGYGVANTRKKDGKLDSLSAFIMIKDYFAL</sequence>
<protein>
    <recommendedName>
        <fullName evidence="1">Putative pre-16S rRNA nuclease</fullName>
        <ecNumber evidence="1">3.1.-.-</ecNumber>
    </recommendedName>
</protein>
<dbReference type="EC" id="3.1.-.-" evidence="1"/>
<dbReference type="EMBL" id="CP000814">
    <property type="protein sequence ID" value="ABV52193.1"/>
    <property type="molecule type" value="Genomic_DNA"/>
</dbReference>
<dbReference type="SMR" id="A8FL56"/>
<dbReference type="KEGG" id="cju:C8J_0594"/>
<dbReference type="HOGENOM" id="CLU_098240_2_2_7"/>
<dbReference type="GO" id="GO:0005829">
    <property type="term" value="C:cytosol"/>
    <property type="evidence" value="ECO:0007669"/>
    <property type="project" value="TreeGrafter"/>
</dbReference>
<dbReference type="GO" id="GO:0004518">
    <property type="term" value="F:nuclease activity"/>
    <property type="evidence" value="ECO:0007669"/>
    <property type="project" value="UniProtKB-KW"/>
</dbReference>
<dbReference type="GO" id="GO:0000967">
    <property type="term" value="P:rRNA 5'-end processing"/>
    <property type="evidence" value="ECO:0007669"/>
    <property type="project" value="UniProtKB-UniRule"/>
</dbReference>
<dbReference type="CDD" id="cd16964">
    <property type="entry name" value="YqgF"/>
    <property type="match status" value="1"/>
</dbReference>
<dbReference type="Gene3D" id="3.30.420.140">
    <property type="entry name" value="YqgF/RNase H-like domain"/>
    <property type="match status" value="1"/>
</dbReference>
<dbReference type="HAMAP" id="MF_00651">
    <property type="entry name" value="Nuclease_YqgF"/>
    <property type="match status" value="1"/>
</dbReference>
<dbReference type="InterPro" id="IPR012337">
    <property type="entry name" value="RNaseH-like_sf"/>
</dbReference>
<dbReference type="InterPro" id="IPR005227">
    <property type="entry name" value="YqgF"/>
</dbReference>
<dbReference type="InterPro" id="IPR006641">
    <property type="entry name" value="YqgF/RNaseH-like_dom"/>
</dbReference>
<dbReference type="InterPro" id="IPR037027">
    <property type="entry name" value="YqgF/RNaseH-like_dom_sf"/>
</dbReference>
<dbReference type="NCBIfam" id="NF001026">
    <property type="entry name" value="PRK00109.2-2"/>
    <property type="match status" value="1"/>
</dbReference>
<dbReference type="NCBIfam" id="TIGR00250">
    <property type="entry name" value="RNAse_H_YqgF"/>
    <property type="match status" value="1"/>
</dbReference>
<dbReference type="PANTHER" id="PTHR33317">
    <property type="entry name" value="POLYNUCLEOTIDYL TRANSFERASE, RIBONUCLEASE H-LIKE SUPERFAMILY PROTEIN"/>
    <property type="match status" value="1"/>
</dbReference>
<dbReference type="PANTHER" id="PTHR33317:SF4">
    <property type="entry name" value="POLYNUCLEOTIDYL TRANSFERASE, RIBONUCLEASE H-LIKE SUPERFAMILY PROTEIN"/>
    <property type="match status" value="1"/>
</dbReference>
<dbReference type="Pfam" id="PF03652">
    <property type="entry name" value="RuvX"/>
    <property type="match status" value="1"/>
</dbReference>
<dbReference type="SMART" id="SM00732">
    <property type="entry name" value="YqgFc"/>
    <property type="match status" value="1"/>
</dbReference>
<dbReference type="SUPFAM" id="SSF53098">
    <property type="entry name" value="Ribonuclease H-like"/>
    <property type="match status" value="1"/>
</dbReference>
<evidence type="ECO:0000255" key="1">
    <source>
        <dbReference type="HAMAP-Rule" id="MF_00651"/>
    </source>
</evidence>